<keyword id="KW-0158">Chromosome</keyword>
<keyword id="KW-0235">DNA replication</keyword>
<keyword id="KW-0539">Nucleus</keyword>
<keyword id="KW-0597">Phosphoprotein</keyword>
<keyword id="KW-1267">Proteomics identification</keyword>
<keyword id="KW-1185">Reference proteome</keyword>
<keyword id="KW-0677">Repeat</keyword>
<keyword id="KW-0853">WD repeat</keyword>
<gene>
    <name type="primary">GRWD1</name>
    <name type="synonym">GRWD</name>
    <name type="synonym">KIAA1942</name>
    <name type="synonym">WDR28</name>
</gene>
<feature type="chain" id="PRO_0000051011" description="Glutamate-rich WD repeat-containing protein 1">
    <location>
        <begin position="1"/>
        <end position="446"/>
    </location>
</feature>
<feature type="repeat" description="WD 1">
    <location>
        <begin position="54"/>
        <end position="110"/>
    </location>
</feature>
<feature type="repeat" description="WD 2">
    <location>
        <begin position="163"/>
        <end position="204"/>
    </location>
</feature>
<feature type="repeat" description="WD 3">
    <location>
        <begin position="205"/>
        <end position="250"/>
    </location>
</feature>
<feature type="repeat" description="WD 4">
    <location>
        <begin position="251"/>
        <end position="297"/>
    </location>
</feature>
<feature type="repeat" description="WD 5">
    <location>
        <begin position="298"/>
        <end position="343"/>
    </location>
</feature>
<feature type="repeat" description="WD 6">
    <location>
        <begin position="344"/>
        <end position="405"/>
    </location>
</feature>
<feature type="repeat" description="WD 7">
    <location>
        <begin position="406"/>
        <end position="442"/>
    </location>
</feature>
<feature type="region of interest" description="Disordered" evidence="1">
    <location>
        <begin position="1"/>
        <end position="38"/>
    </location>
</feature>
<feature type="region of interest" description="Disordered" evidence="1">
    <location>
        <begin position="110"/>
        <end position="141"/>
    </location>
</feature>
<feature type="compositionally biased region" description="Acidic residues" evidence="1">
    <location>
        <begin position="121"/>
        <end position="135"/>
    </location>
</feature>
<feature type="modified residue" description="Phosphothreonine" evidence="8 10">
    <location>
        <position position="10"/>
    </location>
</feature>
<feature type="modified residue" description="Phosphoserine" evidence="7">
    <location>
        <position position="119"/>
    </location>
</feature>
<feature type="modified residue" description="Phosphoserine" evidence="7 9">
    <location>
        <position position="122"/>
    </location>
</feature>
<feature type="modified residue" description="Phosphoserine" evidence="10">
    <location>
        <position position="344"/>
    </location>
</feature>
<feature type="sequence variant" id="VAR_046334" description="In dbSNP:rs2302951." evidence="2">
    <original>R</original>
    <variation>Q</variation>
    <location>
        <position position="319"/>
    </location>
</feature>
<accession>Q9BQ67</accession>
<accession>A0MNN5</accession>
<accession>Q8TF59</accession>
<evidence type="ECO:0000256" key="1">
    <source>
        <dbReference type="SAM" id="MobiDB-lite"/>
    </source>
</evidence>
<evidence type="ECO:0000269" key="2">
    <source>
    </source>
</evidence>
<evidence type="ECO:0000269" key="3">
    <source>
    </source>
</evidence>
<evidence type="ECO:0000269" key="4">
    <source>
    </source>
</evidence>
<evidence type="ECO:0000269" key="5">
    <source>
    </source>
</evidence>
<evidence type="ECO:0000269" key="6">
    <source>
    </source>
</evidence>
<evidence type="ECO:0007744" key="7">
    <source>
    </source>
</evidence>
<evidence type="ECO:0007744" key="8">
    <source>
    </source>
</evidence>
<evidence type="ECO:0007744" key="9">
    <source>
    </source>
</evidence>
<evidence type="ECO:0007744" key="10">
    <source>
    </source>
</evidence>
<dbReference type="EMBL" id="AF337808">
    <property type="protein sequence ID" value="AAK17998.1"/>
    <property type="molecule type" value="mRNA"/>
</dbReference>
<dbReference type="EMBL" id="EF011614">
    <property type="protein sequence ID" value="ABK41104.1"/>
    <property type="molecule type" value="mRNA"/>
</dbReference>
<dbReference type="EMBL" id="AC008403">
    <property type="status" value="NOT_ANNOTATED_CDS"/>
    <property type="molecule type" value="Genomic_DNA"/>
</dbReference>
<dbReference type="EMBL" id="CH471177">
    <property type="protein sequence ID" value="EAW52347.1"/>
    <property type="molecule type" value="Genomic_DNA"/>
</dbReference>
<dbReference type="EMBL" id="BC002440">
    <property type="protein sequence ID" value="AAH02440.1"/>
    <property type="molecule type" value="mRNA"/>
</dbReference>
<dbReference type="EMBL" id="AB075822">
    <property type="protein sequence ID" value="BAB85528.1"/>
    <property type="molecule type" value="mRNA"/>
</dbReference>
<dbReference type="CCDS" id="CCDS12720.1"/>
<dbReference type="RefSeq" id="NP_113673.3">
    <property type="nucleotide sequence ID" value="NM_031485.3"/>
</dbReference>
<dbReference type="SMR" id="Q9BQ67"/>
<dbReference type="BioGRID" id="123751">
    <property type="interactions" value="401"/>
</dbReference>
<dbReference type="CORUM" id="Q9BQ67"/>
<dbReference type="FunCoup" id="Q9BQ67">
    <property type="interactions" value="2511"/>
</dbReference>
<dbReference type="IntAct" id="Q9BQ67">
    <property type="interactions" value="62"/>
</dbReference>
<dbReference type="MINT" id="Q9BQ67"/>
<dbReference type="STRING" id="9606.ENSP00000253237"/>
<dbReference type="GlyGen" id="Q9BQ67">
    <property type="glycosylation" value="1 site, 1 O-linked glycan (1 site)"/>
</dbReference>
<dbReference type="iPTMnet" id="Q9BQ67"/>
<dbReference type="MetOSite" id="Q9BQ67"/>
<dbReference type="PhosphoSitePlus" id="Q9BQ67"/>
<dbReference type="SwissPalm" id="Q9BQ67"/>
<dbReference type="BioMuta" id="GRWD1"/>
<dbReference type="DMDM" id="18202731"/>
<dbReference type="jPOST" id="Q9BQ67"/>
<dbReference type="MassIVE" id="Q9BQ67"/>
<dbReference type="PaxDb" id="9606-ENSP00000253237"/>
<dbReference type="PeptideAtlas" id="Q9BQ67"/>
<dbReference type="ProteomicsDB" id="78636"/>
<dbReference type="Pumba" id="Q9BQ67"/>
<dbReference type="Antibodypedia" id="31711">
    <property type="antibodies" value="132 antibodies from 21 providers"/>
</dbReference>
<dbReference type="DNASU" id="83743"/>
<dbReference type="Ensembl" id="ENST00000253237.10">
    <property type="protein sequence ID" value="ENSP00000253237.4"/>
    <property type="gene ID" value="ENSG00000105447.13"/>
</dbReference>
<dbReference type="GeneID" id="83743"/>
<dbReference type="KEGG" id="hsa:83743"/>
<dbReference type="MANE-Select" id="ENST00000253237.10">
    <property type="protein sequence ID" value="ENSP00000253237.4"/>
    <property type="RefSeq nucleotide sequence ID" value="NM_031485.4"/>
    <property type="RefSeq protein sequence ID" value="NP_113673.3"/>
</dbReference>
<dbReference type="UCSC" id="uc002pjd.3">
    <property type="organism name" value="human"/>
</dbReference>
<dbReference type="AGR" id="HGNC:21270"/>
<dbReference type="CTD" id="83743"/>
<dbReference type="DisGeNET" id="83743"/>
<dbReference type="GeneCards" id="GRWD1"/>
<dbReference type="HGNC" id="HGNC:21270">
    <property type="gene designation" value="GRWD1"/>
</dbReference>
<dbReference type="HPA" id="ENSG00000105447">
    <property type="expression patterns" value="Low tissue specificity"/>
</dbReference>
<dbReference type="MalaCards" id="GRWD1"/>
<dbReference type="MIM" id="610597">
    <property type="type" value="gene"/>
</dbReference>
<dbReference type="neXtProt" id="NX_Q9BQ67"/>
<dbReference type="OpenTargets" id="ENSG00000105447"/>
<dbReference type="PharmGKB" id="PA134897548"/>
<dbReference type="VEuPathDB" id="HostDB:ENSG00000105447"/>
<dbReference type="eggNOG" id="KOG0302">
    <property type="taxonomic scope" value="Eukaryota"/>
</dbReference>
<dbReference type="GeneTree" id="ENSGT00550000075124"/>
<dbReference type="HOGENOM" id="CLU_025272_1_1_1"/>
<dbReference type="InParanoid" id="Q9BQ67"/>
<dbReference type="OMA" id="RHWKPNA"/>
<dbReference type="OrthoDB" id="2161379at2759"/>
<dbReference type="PAN-GO" id="Q9BQ67">
    <property type="GO annotations" value="2 GO annotations based on evolutionary models"/>
</dbReference>
<dbReference type="PhylomeDB" id="Q9BQ67"/>
<dbReference type="TreeFam" id="TF312982"/>
<dbReference type="PathwayCommons" id="Q9BQ67"/>
<dbReference type="SignaLink" id="Q9BQ67"/>
<dbReference type="BioGRID-ORCS" id="83743">
    <property type="hits" value="658 hits in 1161 CRISPR screens"/>
</dbReference>
<dbReference type="CD-CODE" id="91857CE7">
    <property type="entry name" value="Nucleolus"/>
</dbReference>
<dbReference type="ChiTaRS" id="GRWD1">
    <property type="organism name" value="human"/>
</dbReference>
<dbReference type="GeneWiki" id="GRWD1"/>
<dbReference type="GenomeRNAi" id="83743"/>
<dbReference type="Pharos" id="Q9BQ67">
    <property type="development level" value="Tbio"/>
</dbReference>
<dbReference type="PRO" id="PR:Q9BQ67"/>
<dbReference type="Proteomes" id="UP000005640">
    <property type="component" value="Chromosome 19"/>
</dbReference>
<dbReference type="RNAct" id="Q9BQ67">
    <property type="molecule type" value="protein"/>
</dbReference>
<dbReference type="Bgee" id="ENSG00000105447">
    <property type="expression patterns" value="Expressed in tongue squamous epithelium and 202 other cell types or tissues"/>
</dbReference>
<dbReference type="ExpressionAtlas" id="Q9BQ67">
    <property type="expression patterns" value="baseline and differential"/>
</dbReference>
<dbReference type="GO" id="GO:0005694">
    <property type="term" value="C:chromosome"/>
    <property type="evidence" value="ECO:0007669"/>
    <property type="project" value="UniProtKB-SubCell"/>
</dbReference>
<dbReference type="GO" id="GO:0005829">
    <property type="term" value="C:cytosol"/>
    <property type="evidence" value="ECO:0000314"/>
    <property type="project" value="HPA"/>
</dbReference>
<dbReference type="GO" id="GO:0005730">
    <property type="term" value="C:nucleolus"/>
    <property type="evidence" value="ECO:0000314"/>
    <property type="project" value="HPA"/>
</dbReference>
<dbReference type="GO" id="GO:0005654">
    <property type="term" value="C:nucleoplasm"/>
    <property type="evidence" value="ECO:0000314"/>
    <property type="project" value="HPA"/>
</dbReference>
<dbReference type="GO" id="GO:0005634">
    <property type="term" value="C:nucleus"/>
    <property type="evidence" value="ECO:0000314"/>
    <property type="project" value="UniProtKB"/>
</dbReference>
<dbReference type="GO" id="GO:0032991">
    <property type="term" value="C:protein-containing complex"/>
    <property type="evidence" value="ECO:0000314"/>
    <property type="project" value="UniProtKB"/>
</dbReference>
<dbReference type="GO" id="GO:0003682">
    <property type="term" value="F:chromatin binding"/>
    <property type="evidence" value="ECO:0000314"/>
    <property type="project" value="UniProtKB"/>
</dbReference>
<dbReference type="GO" id="GO:0003688">
    <property type="term" value="F:DNA replication origin binding"/>
    <property type="evidence" value="ECO:0000314"/>
    <property type="project" value="UniProtKB"/>
</dbReference>
<dbReference type="GO" id="GO:0042393">
    <property type="term" value="F:histone binding"/>
    <property type="evidence" value="ECO:0000314"/>
    <property type="project" value="UniProtKB"/>
</dbReference>
<dbReference type="GO" id="GO:0003723">
    <property type="term" value="F:RNA binding"/>
    <property type="evidence" value="ECO:0007005"/>
    <property type="project" value="UniProtKB"/>
</dbReference>
<dbReference type="GO" id="GO:0006260">
    <property type="term" value="P:DNA replication"/>
    <property type="evidence" value="ECO:0000315"/>
    <property type="project" value="UniProtKB"/>
</dbReference>
<dbReference type="GO" id="GO:0006334">
    <property type="term" value="P:nucleosome assembly"/>
    <property type="evidence" value="ECO:0000314"/>
    <property type="project" value="UniProtKB"/>
</dbReference>
<dbReference type="GO" id="GO:0006337">
    <property type="term" value="P:nucleosome disassembly"/>
    <property type="evidence" value="ECO:0000315"/>
    <property type="project" value="UniProtKB"/>
</dbReference>
<dbReference type="GO" id="GO:0042254">
    <property type="term" value="P:ribosome biogenesis"/>
    <property type="evidence" value="ECO:0000318"/>
    <property type="project" value="GO_Central"/>
</dbReference>
<dbReference type="FunFam" id="2.130.10.10:FF:000332">
    <property type="entry name" value="glutamate-rich WD repeat-containing protein 1"/>
    <property type="match status" value="1"/>
</dbReference>
<dbReference type="Gene3D" id="2.130.10.10">
    <property type="entry name" value="YVTN repeat-like/Quinoprotein amine dehydrogenase"/>
    <property type="match status" value="1"/>
</dbReference>
<dbReference type="InterPro" id="IPR020472">
    <property type="entry name" value="G-protein_beta_WD-40_rep"/>
</dbReference>
<dbReference type="InterPro" id="IPR051972">
    <property type="entry name" value="Glutamate-rich_WD_repeat"/>
</dbReference>
<dbReference type="InterPro" id="IPR022052">
    <property type="entry name" value="Histone-bd_RBBP4-like_N"/>
</dbReference>
<dbReference type="InterPro" id="IPR015943">
    <property type="entry name" value="WD40/YVTN_repeat-like_dom_sf"/>
</dbReference>
<dbReference type="InterPro" id="IPR019775">
    <property type="entry name" value="WD40_repeat_CS"/>
</dbReference>
<dbReference type="InterPro" id="IPR036322">
    <property type="entry name" value="WD40_repeat_dom_sf"/>
</dbReference>
<dbReference type="InterPro" id="IPR001680">
    <property type="entry name" value="WD40_rpt"/>
</dbReference>
<dbReference type="PANTHER" id="PTHR45903">
    <property type="entry name" value="GLUTAMATE-RICH WD REPEAT-CONTAINING PROTEIN 1"/>
    <property type="match status" value="1"/>
</dbReference>
<dbReference type="PANTHER" id="PTHR45903:SF1">
    <property type="entry name" value="GLUTAMATE-RICH WD REPEAT-CONTAINING PROTEIN 1"/>
    <property type="match status" value="1"/>
</dbReference>
<dbReference type="Pfam" id="PF12265">
    <property type="entry name" value="CAF1C_H4-bd"/>
    <property type="match status" value="1"/>
</dbReference>
<dbReference type="Pfam" id="PF00400">
    <property type="entry name" value="WD40"/>
    <property type="match status" value="3"/>
</dbReference>
<dbReference type="PRINTS" id="PR00320">
    <property type="entry name" value="GPROTEINBRPT"/>
</dbReference>
<dbReference type="SMART" id="SM00320">
    <property type="entry name" value="WD40"/>
    <property type="match status" value="4"/>
</dbReference>
<dbReference type="SUPFAM" id="SSF50978">
    <property type="entry name" value="WD40 repeat-like"/>
    <property type="match status" value="1"/>
</dbReference>
<dbReference type="PROSITE" id="PS00678">
    <property type="entry name" value="WD_REPEATS_1"/>
    <property type="match status" value="1"/>
</dbReference>
<dbReference type="PROSITE" id="PS50082">
    <property type="entry name" value="WD_REPEATS_2"/>
    <property type="match status" value="3"/>
</dbReference>
<dbReference type="PROSITE" id="PS50294">
    <property type="entry name" value="WD_REPEATS_REGION"/>
    <property type="match status" value="1"/>
</dbReference>
<sequence length="446" mass="49419">MAARKGRRRTCETGEPMEAESGDTSSEGPAQVYLPGRGPPLREGEELVMDEEAYVLYHRAQTGAPCLSFDIVRDHLGDNRTELPLTLYLCAGTQAESAQSNRLMMLRMHNLHGTKPPPSEGSDEEEEEEDEEDEEERKPQLELAMVPHYGGINRVRVSWLGEEPVAGVWSEKGQVEVFALRRLLQVVEEPQALAAFLRDEQAQMKPIFSFAGHMGEGFALDWSPRVTGRLLTGDCQKNIHLWTPTDGGSWHVDQRPFVGHTRSVEDLQWSPTENTVFASCSADASIRIWDIRAAPSKACMLTTATAHDGDVNVISWSRREPFLLSGGDDGALKIWDLRQFKSGSPVATFKQHVAPVTSVEWHPQDSGVFAASGADHQITQWDLAVERDPEAGDVEADPGLADLPQQLLFVHQGETELKELHWHPQCPGLLVSTALSGFTIFRTISV</sequence>
<name>GRWD1_HUMAN</name>
<proteinExistence type="evidence at protein level"/>
<reference key="1">
    <citation type="submission" date="2001-01" db="EMBL/GenBank/DDBJ databases">
        <title>Cloning and expression of a novel glutamate rich WD repeat (GRWD) protein with roles in cell proliferation.</title>
        <authorList>
            <person name="Fletcher B.S."/>
            <person name="Gratenstein K.B."/>
            <person name="Notterpek L.M."/>
        </authorList>
    </citation>
    <scope>NUCLEOTIDE SEQUENCE [MRNA]</scope>
</reference>
<reference key="2">
    <citation type="journal article" date="2004" name="Genome Res.">
        <title>The status, quality, and expansion of the NIH full-length cDNA project: the Mammalian Gene Collection (MGC).</title>
        <authorList>
            <consortium name="The MGC Project Team"/>
        </authorList>
    </citation>
    <scope>NUCLEOTIDE SEQUENCE [LARGE SCALE MRNA]</scope>
    <source>
        <tissue>Kidney</tissue>
    </source>
</reference>
<reference key="3">
    <citation type="journal article" date="2004" name="Nature">
        <title>The DNA sequence and biology of human chromosome 19.</title>
        <authorList>
            <person name="Grimwood J."/>
            <person name="Gordon L.A."/>
            <person name="Olsen A.S."/>
            <person name="Terry A."/>
            <person name="Schmutz J."/>
            <person name="Lamerdin J.E."/>
            <person name="Hellsten U."/>
            <person name="Goodstein D."/>
            <person name="Couronne O."/>
            <person name="Tran-Gyamfi M."/>
            <person name="Aerts A."/>
            <person name="Altherr M."/>
            <person name="Ashworth L."/>
            <person name="Bajorek E."/>
            <person name="Black S."/>
            <person name="Branscomb E."/>
            <person name="Caenepeel S."/>
            <person name="Carrano A.V."/>
            <person name="Caoile C."/>
            <person name="Chan Y.M."/>
            <person name="Christensen M."/>
            <person name="Cleland C.A."/>
            <person name="Copeland A."/>
            <person name="Dalin E."/>
            <person name="Dehal P."/>
            <person name="Denys M."/>
            <person name="Detter J.C."/>
            <person name="Escobar J."/>
            <person name="Flowers D."/>
            <person name="Fotopulos D."/>
            <person name="Garcia C."/>
            <person name="Georgescu A.M."/>
            <person name="Glavina T."/>
            <person name="Gomez M."/>
            <person name="Gonzales E."/>
            <person name="Groza M."/>
            <person name="Hammon N."/>
            <person name="Hawkins T."/>
            <person name="Haydu L."/>
            <person name="Ho I."/>
            <person name="Huang W."/>
            <person name="Israni S."/>
            <person name="Jett J."/>
            <person name="Kadner K."/>
            <person name="Kimball H."/>
            <person name="Kobayashi A."/>
            <person name="Larionov V."/>
            <person name="Leem S.-H."/>
            <person name="Lopez F."/>
            <person name="Lou Y."/>
            <person name="Lowry S."/>
            <person name="Malfatti S."/>
            <person name="Martinez D."/>
            <person name="McCready P.M."/>
            <person name="Medina C."/>
            <person name="Morgan J."/>
            <person name="Nelson K."/>
            <person name="Nolan M."/>
            <person name="Ovcharenko I."/>
            <person name="Pitluck S."/>
            <person name="Pollard M."/>
            <person name="Popkie A.P."/>
            <person name="Predki P."/>
            <person name="Quan G."/>
            <person name="Ramirez L."/>
            <person name="Rash S."/>
            <person name="Retterer J."/>
            <person name="Rodriguez A."/>
            <person name="Rogers S."/>
            <person name="Salamov A."/>
            <person name="Salazar A."/>
            <person name="She X."/>
            <person name="Smith D."/>
            <person name="Slezak T."/>
            <person name="Solovyev V."/>
            <person name="Thayer N."/>
            <person name="Tice H."/>
            <person name="Tsai M."/>
            <person name="Ustaszewska A."/>
            <person name="Vo N."/>
            <person name="Wagner M."/>
            <person name="Wheeler J."/>
            <person name="Wu K."/>
            <person name="Xie G."/>
            <person name="Yang J."/>
            <person name="Dubchak I."/>
            <person name="Furey T.S."/>
            <person name="DeJong P."/>
            <person name="Dickson M."/>
            <person name="Gordon D."/>
            <person name="Eichler E.E."/>
            <person name="Pennacchio L.A."/>
            <person name="Richardson P."/>
            <person name="Stubbs L."/>
            <person name="Rokhsar D.S."/>
            <person name="Myers R.M."/>
            <person name="Rubin E.M."/>
            <person name="Lucas S.M."/>
        </authorList>
    </citation>
    <scope>NUCLEOTIDE SEQUENCE [LARGE SCALE GENOMIC DNA]</scope>
</reference>
<reference key="4">
    <citation type="submission" date="2005-07" db="EMBL/GenBank/DDBJ databases">
        <authorList>
            <person name="Mural R.J."/>
            <person name="Istrail S."/>
            <person name="Sutton G.G."/>
            <person name="Florea L."/>
            <person name="Halpern A.L."/>
            <person name="Mobarry C.M."/>
            <person name="Lippert R."/>
            <person name="Walenz B."/>
            <person name="Shatkay H."/>
            <person name="Dew I."/>
            <person name="Miller J.R."/>
            <person name="Flanigan M.J."/>
            <person name="Edwards N.J."/>
            <person name="Bolanos R."/>
            <person name="Fasulo D."/>
            <person name="Halldorsson B.V."/>
            <person name="Hannenhalli S."/>
            <person name="Turner R."/>
            <person name="Yooseph S."/>
            <person name="Lu F."/>
            <person name="Nusskern D.R."/>
            <person name="Shue B.C."/>
            <person name="Zheng X.H."/>
            <person name="Zhong F."/>
            <person name="Delcher A.L."/>
            <person name="Huson D.H."/>
            <person name="Kravitz S.A."/>
            <person name="Mouchard L."/>
            <person name="Reinert K."/>
            <person name="Remington K.A."/>
            <person name="Clark A.G."/>
            <person name="Waterman M.S."/>
            <person name="Eichler E.E."/>
            <person name="Adams M.D."/>
            <person name="Hunkapiller M.W."/>
            <person name="Myers E.W."/>
            <person name="Venter J.C."/>
        </authorList>
    </citation>
    <scope>NUCLEOTIDE SEQUENCE [LARGE SCALE GENOMIC DNA]</scope>
</reference>
<reference key="5">
    <citation type="journal article" date="2006" name="Nat. Cell Biol.">
        <title>CUL4-DDB1 ubiquitin ligase interacts with multiple WD40-repeat proteins and regulates histone methylation.</title>
        <authorList>
            <person name="Higa L.A."/>
            <person name="Wu M."/>
            <person name="Ye T."/>
            <person name="Kobayashi R."/>
            <person name="Sun H."/>
            <person name="Zhang H."/>
        </authorList>
    </citation>
    <scope>NUCLEOTIDE SEQUENCE [MRNA]</scope>
    <scope>IDENTIFICATION BY MASS SPECTROMETRY</scope>
</reference>
<reference key="6">
    <citation type="journal article" date="2001" name="DNA Res.">
        <title>Prediction of the coding sequences of unidentified human genes. XXII. The complete sequences of 50 new cDNA clones which code for large proteins.</title>
        <authorList>
            <person name="Nagase T."/>
            <person name="Kikuno R."/>
            <person name="Ohara O."/>
        </authorList>
    </citation>
    <scope>NUCLEOTIDE SEQUENCE [LARGE SCALE MRNA] OF 2-446</scope>
    <scope>VARIANT GLN-319</scope>
    <source>
        <tissue>Brain</tissue>
    </source>
</reference>
<reference key="7">
    <citation type="journal article" date="2002" name="Mol. Biol. Cell">
        <title>Functional proteomic analysis of human nucleolus.</title>
        <authorList>
            <person name="Scherl A."/>
            <person name="Coute Y."/>
            <person name="Deon C."/>
            <person name="Calle A."/>
            <person name="Kindbeiter K."/>
            <person name="Sanchez J.-C."/>
            <person name="Greco A."/>
            <person name="Hochstrasser D.F."/>
            <person name="Diaz J.-J."/>
        </authorList>
    </citation>
    <scope>SUBCELLULAR LOCATION [LARGE SCALE ANALYSIS]</scope>
    <source>
        <tissue>Cervix carcinoma</tissue>
    </source>
</reference>
<reference key="8">
    <citation type="journal article" date="2004" name="Oncogene">
        <title>Regulation of Geminin and Cdt1 expression by E2F transcription factors.</title>
        <authorList>
            <person name="Yoshida K."/>
            <person name="Inoue I."/>
        </authorList>
    </citation>
    <scope>INDUCTION</scope>
</reference>
<reference key="9">
    <citation type="journal article" date="2006" name="Cell">
        <title>Global, in vivo, and site-specific phosphorylation dynamics in signaling networks.</title>
        <authorList>
            <person name="Olsen J.V."/>
            <person name="Blagoev B."/>
            <person name="Gnad F."/>
            <person name="Macek B."/>
            <person name="Kumar C."/>
            <person name="Mortensen P."/>
            <person name="Mann M."/>
        </authorList>
    </citation>
    <scope>PHOSPHORYLATION [LARGE SCALE ANALYSIS] AT SER-119 AND SER-122</scope>
    <scope>IDENTIFICATION BY MASS SPECTROMETRY [LARGE SCALE ANALYSIS]</scope>
    <source>
        <tissue>Cervix carcinoma</tissue>
    </source>
</reference>
<reference key="10">
    <citation type="journal article" date="2008" name="J. Proteome Res.">
        <title>Combining protein-based IMAC, peptide-based IMAC, and MudPIT for efficient phosphoproteomic analysis.</title>
        <authorList>
            <person name="Cantin G.T."/>
            <person name="Yi W."/>
            <person name="Lu B."/>
            <person name="Park S.K."/>
            <person name="Xu T."/>
            <person name="Lee J.-D."/>
            <person name="Yates J.R. III"/>
        </authorList>
    </citation>
    <scope>PHOSPHORYLATION [LARGE SCALE ANALYSIS] AT THR-10</scope>
    <scope>IDENTIFICATION BY MASS SPECTROMETRY [LARGE SCALE ANALYSIS]</scope>
    <source>
        <tissue>Cervix carcinoma</tissue>
    </source>
</reference>
<reference key="11">
    <citation type="journal article" date="2008" name="Proc. Natl. Acad. Sci. U.S.A.">
        <title>A quantitative atlas of mitotic phosphorylation.</title>
        <authorList>
            <person name="Dephoure N."/>
            <person name="Zhou C."/>
            <person name="Villen J."/>
            <person name="Beausoleil S.A."/>
            <person name="Bakalarski C.E."/>
            <person name="Elledge S.J."/>
            <person name="Gygi S.P."/>
        </authorList>
    </citation>
    <scope>IDENTIFICATION BY MASS SPECTROMETRY [LARGE SCALE ANALYSIS]</scope>
    <source>
        <tissue>Cervix carcinoma</tissue>
    </source>
</reference>
<reference key="12">
    <citation type="journal article" date="2011" name="BMC Syst. Biol.">
        <title>Initial characterization of the human central proteome.</title>
        <authorList>
            <person name="Burkard T.R."/>
            <person name="Planyavsky M."/>
            <person name="Kaupe I."/>
            <person name="Breitwieser F.P."/>
            <person name="Buerckstuemmer T."/>
            <person name="Bennett K.L."/>
            <person name="Superti-Furga G."/>
            <person name="Colinge J."/>
        </authorList>
    </citation>
    <scope>IDENTIFICATION BY MASS SPECTROMETRY [LARGE SCALE ANALYSIS]</scope>
</reference>
<reference key="13">
    <citation type="journal article" date="2011" name="Sci. Signal.">
        <title>System-wide temporal characterization of the proteome and phosphoproteome of human embryonic stem cell differentiation.</title>
        <authorList>
            <person name="Rigbolt K.T."/>
            <person name="Prokhorova T.A."/>
            <person name="Akimov V."/>
            <person name="Henningsen J."/>
            <person name="Johansen P.T."/>
            <person name="Kratchmarova I."/>
            <person name="Kassem M."/>
            <person name="Mann M."/>
            <person name="Olsen J.V."/>
            <person name="Blagoev B."/>
        </authorList>
    </citation>
    <scope>PHOSPHORYLATION [LARGE SCALE ANALYSIS] AT SER-122</scope>
    <scope>IDENTIFICATION BY MASS SPECTROMETRY [LARGE SCALE ANALYSIS]</scope>
</reference>
<reference key="14">
    <citation type="journal article" date="2013" name="J. Proteome Res.">
        <title>Toward a comprehensive characterization of a human cancer cell phosphoproteome.</title>
        <authorList>
            <person name="Zhou H."/>
            <person name="Di Palma S."/>
            <person name="Preisinger C."/>
            <person name="Peng M."/>
            <person name="Polat A.N."/>
            <person name="Heck A.J."/>
            <person name="Mohammed S."/>
        </authorList>
    </citation>
    <scope>PHOSPHORYLATION [LARGE SCALE ANALYSIS] AT THR-10 AND SER-344</scope>
    <scope>IDENTIFICATION BY MASS SPECTROMETRY [LARGE SCALE ANALYSIS]</scope>
    <source>
        <tissue>Cervix carcinoma</tissue>
        <tissue>Erythroleukemia</tissue>
    </source>
</reference>
<reference key="15">
    <citation type="journal article" date="2013" name="PLoS Genet.">
        <title>A newly uncovered group of distantly related lysine methyltransferases preferentially interact with molecular chaperones to regulate their activity.</title>
        <authorList>
            <person name="Cloutier P."/>
            <person name="Lavallee-Adam M."/>
            <person name="Faubert D."/>
            <person name="Blanchette M."/>
            <person name="Coulombe B."/>
        </authorList>
    </citation>
    <scope>INTERACTION WITH METTL18</scope>
</reference>
<reference key="16">
    <citation type="journal article" date="2015" name="Nucleic Acids Res.">
        <title>Cdt1-binding protein GRWD1 is a novel histone-binding protein that facilitates MCM loading through its influence on chromatin architecture.</title>
        <authorList>
            <person name="Sugimoto N."/>
            <person name="Maehara K."/>
            <person name="Yoshida K."/>
            <person name="Yasukouchi S."/>
            <person name="Osano S."/>
            <person name="Watanabe S."/>
            <person name="Aizawa M."/>
            <person name="Yugawa T."/>
            <person name="Kiyono T."/>
            <person name="Kurumizaka H."/>
            <person name="Ohkawa Y."/>
            <person name="Fujita M."/>
        </authorList>
    </citation>
    <scope>INTERACTION WITH CDT1 AND CDC6</scope>
    <scope>FUNCTION</scope>
    <scope>SUBCELLULAR LOCATION</scope>
    <scope>HISTONE-BINDING</scope>
</reference>
<protein>
    <recommendedName>
        <fullName>Glutamate-rich WD repeat-containing protein 1</fullName>
    </recommendedName>
</protein>
<organism>
    <name type="scientific">Homo sapiens</name>
    <name type="common">Human</name>
    <dbReference type="NCBI Taxonomy" id="9606"/>
    <lineage>
        <taxon>Eukaryota</taxon>
        <taxon>Metazoa</taxon>
        <taxon>Chordata</taxon>
        <taxon>Craniata</taxon>
        <taxon>Vertebrata</taxon>
        <taxon>Euteleostomi</taxon>
        <taxon>Mammalia</taxon>
        <taxon>Eutheria</taxon>
        <taxon>Euarchontoglires</taxon>
        <taxon>Primates</taxon>
        <taxon>Haplorrhini</taxon>
        <taxon>Catarrhini</taxon>
        <taxon>Hominidae</taxon>
        <taxon>Homo</taxon>
    </lineage>
</organism>
<comment type="function">
    <text evidence="6">Histone binding-protein that regulates chromatin dynamics and minichromosome maintenance (MCM) loading at replication origins, possibly by promoting chromatin openness (PubMed:25990725).</text>
</comment>
<comment type="subunit">
    <text evidence="5 6">Interacts with METTL18 (PubMed:23349634). Interacts with CDT1; origin binding of GRWD1 is dependent on CDT1 (PubMed:25990725). Interacts with CDC6; origin binding of GRWD1 is dependent on CDC6 (PubMed:25990725). Binds to histone H2A-H2B and H3-H4 complexes (PubMed:25990725).</text>
</comment>
<comment type="subcellular location">
    <subcellularLocation>
        <location evidence="3">Nucleus</location>
        <location evidence="3">Nucleolus</location>
    </subcellularLocation>
    <subcellularLocation>
        <location evidence="6">Nucleus</location>
    </subcellularLocation>
    <subcellularLocation>
        <location evidence="6">Chromosome</location>
    </subcellularLocation>
    <text evidence="6">Present in the nucleus throughout interphase and is detached from chromatin at the onset of mitosis and rebinds at telophase when the pre-replication complexes (pre-RC) is formed (PubMed:25990725).</text>
</comment>
<comment type="induction">
    <text evidence="4">Induced by E2F transcription factors (PubMed:14990995).</text>
</comment>